<evidence type="ECO:0000250" key="1"/>
<evidence type="ECO:0000256" key="2">
    <source>
        <dbReference type="SAM" id="MobiDB-lite"/>
    </source>
</evidence>
<evidence type="ECO:0000305" key="3"/>
<proteinExistence type="inferred from homology"/>
<sequence>MHRPRSSWPNLVWDHSFPHHVLTQGKYTTIPYRTYICLQGNETSLKEAEWAIRNDNPRALVKSYNKELWTFTLQEGVTPPSALDRFQLTETTTGVFLPSTTTPSSLTMTKQLTPPGYVALMLAIEAMIQEALKRDDHYVPFGNNLILPVTGDLLHLDARLTPGGDLLLQMYQQETEWEMFGKRKRDVANEIVGTKVVVAPTLVEGVVENSTNQIPDNLPVLLEMLDCLCSVRLRAKKQWTAVRIDTEVLLWPTELLFVDRKSATGKLEDEGKDALLWTEDILDSVFEATQLIRRGESGVNTNESTAAQPQPAQNGTNSMAPAAGTTNATTQRNEENKQIYPTPPEAPKRILPGILLERATAPAGGWGELDEELFGGDEVTEADFNFFDDMGGDKNDTDGDNDNGNDNDNDKADAMDVDVKEEAKKEEMIKKETKEEVPVKEEVQEEEPDESATTAALLTNNPAEEKAVVHGVNDSSTVNGAVDAAVSATVVSSVPYLPSDFDQLIVNPAEQRTFALVEFNREAEQRLNDKYAAGGRFFVPDDSSSDNEGSSDNTGDSSDSGDGSESVPRDVKRQKVDEGTLSDQTDEPEIDAKQLHQQWSAILNYNHDDKPAKKIDSSNDTTNSDGNSNNSNYEEAVQRLAEQVVWDNSCYKGLVPQENYYRPPSARFVKVVEQVFGDTSKRLSLIDFAKMSDKGGQQQPGVGMPINAAAGTAGGGPGTPVTVSNASGVPSGSSGAQASQMGALAVGSALSPSRGATPQPEGSSPETRPSNWTPGITSQVNSAASSPVPLQQHQQQQQSFSPMSPQTPAQAPVPSANSFANAANAAPTQRLATPMYSFMRGGSLIKAQPPILRFWSTFGLSPRNGPKPLTLTLIYPSGTAIGDAAAAFLISFKMCYEGCGFGLVTLGGSNGTGVVSSDYKNLDVSREGVLLVSNPYNDVLGFLNLAKAAAAGSKTATSTSTILTLPCSIFASYTALRAPSAMLLAALCRNLYDHLPPTSTKRRYGSVIQRQAPACVISKPVPPFINFKLLANTPDSVINEDSLLHVAYAASNRWITCAWSDQWGELAKVKVFCLQSESGPLRTLEEVCTEIWETTLQLNGSTDVRSVAVAKLGGMLDDELAMWLRVSSVTRGRRITPFFLVVDNRPSMVVTGSDDGSKGGNVAGGPAPAPPTGAAGAASTGSAPMSTPFRDTDSPDIYNHVTTPSVGEDKIDYDDMSIVDVHDEIHSVTLNHRQPLTMHSTRLGLATGYLVKTSPLNPNQLLVFSLTFVNCPCVVMHVAMKHFLRQYRNLISLAATTGVCDPEYAIVPWHVEAVDKMMRLVEEL</sequence>
<name>SSN2_YARLI</name>
<protein>
    <recommendedName>
        <fullName>Mediator of RNA polymerase II transcription subunit 13</fullName>
    </recommendedName>
    <alternativeName>
        <fullName>Mediator complex subunit 13</fullName>
    </alternativeName>
</protein>
<organism>
    <name type="scientific">Yarrowia lipolytica (strain CLIB 122 / E 150)</name>
    <name type="common">Yeast</name>
    <name type="synonym">Candida lipolytica</name>
    <dbReference type="NCBI Taxonomy" id="284591"/>
    <lineage>
        <taxon>Eukaryota</taxon>
        <taxon>Fungi</taxon>
        <taxon>Dikarya</taxon>
        <taxon>Ascomycota</taxon>
        <taxon>Saccharomycotina</taxon>
        <taxon>Dipodascomycetes</taxon>
        <taxon>Dipodascales</taxon>
        <taxon>Dipodascales incertae sedis</taxon>
        <taxon>Yarrowia</taxon>
    </lineage>
</organism>
<comment type="function">
    <text evidence="1">Component of the SRB8-11 complex. The SRB8-11 complex is a regulatory module of the Mediator complex which is itself involved in regulation of basal and activated RNA polymerase II-dependent transcription. The SRB8-11 complex may be involved in the transcriptional repression of a subset of genes regulated by Mediator. It may inhibit the association of the Mediator complex with RNA polymerase II to form the holoenzyme complex (By similarity).</text>
</comment>
<comment type="subunit">
    <text evidence="1">Component of the SRB8-11 complex, which itself associates with the Mediator complex.</text>
</comment>
<comment type="subcellular location">
    <subcellularLocation>
        <location evidence="3">Nucleus</location>
    </subcellularLocation>
</comment>
<comment type="similarity">
    <text evidence="3">Belongs to the Mediator complex subunit 13 family.</text>
</comment>
<comment type="sequence caution" evidence="3">
    <conflict type="erroneous gene model prediction">
        <sequence resource="EMBL-CDS" id="CAG80791"/>
    </conflict>
</comment>
<keyword id="KW-0010">Activator</keyword>
<keyword id="KW-0539">Nucleus</keyword>
<keyword id="KW-1185">Reference proteome</keyword>
<keyword id="KW-0678">Repressor</keyword>
<keyword id="KW-0804">Transcription</keyword>
<keyword id="KW-0805">Transcription regulation</keyword>
<gene>
    <name type="primary">SSN2</name>
    <name type="synonym">MED13</name>
    <name type="ordered locus">YALI0D09086g</name>
</gene>
<feature type="chain" id="PRO_0000314252" description="Mediator of RNA polymerase II transcription subunit 13">
    <location>
        <begin position="1"/>
        <end position="1324"/>
    </location>
</feature>
<feature type="region of interest" description="Disordered" evidence="2">
    <location>
        <begin position="296"/>
        <end position="346"/>
    </location>
</feature>
<feature type="region of interest" description="Disordered" evidence="2">
    <location>
        <begin position="386"/>
        <end position="455"/>
    </location>
</feature>
<feature type="region of interest" description="Disordered" evidence="2">
    <location>
        <begin position="535"/>
        <end position="590"/>
    </location>
</feature>
<feature type="region of interest" description="Disordered" evidence="2">
    <location>
        <begin position="607"/>
        <end position="631"/>
    </location>
</feature>
<feature type="region of interest" description="Disordered" evidence="2">
    <location>
        <begin position="694"/>
        <end position="816"/>
    </location>
</feature>
<feature type="region of interest" description="Disordered" evidence="2">
    <location>
        <begin position="1151"/>
        <end position="1198"/>
    </location>
</feature>
<feature type="compositionally biased region" description="Polar residues" evidence="2">
    <location>
        <begin position="298"/>
        <end position="331"/>
    </location>
</feature>
<feature type="compositionally biased region" description="Acidic residues" evidence="2">
    <location>
        <begin position="398"/>
        <end position="407"/>
    </location>
</feature>
<feature type="compositionally biased region" description="Basic and acidic residues" evidence="2">
    <location>
        <begin position="408"/>
        <end position="442"/>
    </location>
</feature>
<feature type="compositionally biased region" description="Low complexity" evidence="2">
    <location>
        <begin position="546"/>
        <end position="566"/>
    </location>
</feature>
<feature type="compositionally biased region" description="Basic and acidic residues" evidence="2">
    <location>
        <begin position="567"/>
        <end position="578"/>
    </location>
</feature>
<feature type="compositionally biased region" description="Basic and acidic residues" evidence="2">
    <location>
        <begin position="607"/>
        <end position="617"/>
    </location>
</feature>
<feature type="compositionally biased region" description="Low complexity" evidence="2">
    <location>
        <begin position="618"/>
        <end position="631"/>
    </location>
</feature>
<feature type="compositionally biased region" description="Low complexity" evidence="2">
    <location>
        <begin position="724"/>
        <end position="743"/>
    </location>
</feature>
<feature type="compositionally biased region" description="Polar residues" evidence="2">
    <location>
        <begin position="750"/>
        <end position="784"/>
    </location>
</feature>
<feature type="compositionally biased region" description="Low complexity" evidence="2">
    <location>
        <begin position="785"/>
        <end position="816"/>
    </location>
</feature>
<feature type="compositionally biased region" description="Low complexity" evidence="2">
    <location>
        <begin position="1172"/>
        <end position="1184"/>
    </location>
</feature>
<accession>Q6C9Q9</accession>
<dbReference type="EMBL" id="CR382130">
    <property type="protein sequence ID" value="CAG80791.2"/>
    <property type="status" value="ALT_SEQ"/>
    <property type="molecule type" value="Genomic_DNA"/>
</dbReference>
<dbReference type="RefSeq" id="XP_502603.2">
    <property type="nucleotide sequence ID" value="XM_502603.2"/>
</dbReference>
<dbReference type="FunCoup" id="Q6C9Q9">
    <property type="interactions" value="120"/>
</dbReference>
<dbReference type="STRING" id="284591.Q6C9Q9"/>
<dbReference type="InParanoid" id="Q6C9Q9"/>
<dbReference type="OrthoDB" id="127124at4891"/>
<dbReference type="Proteomes" id="UP000001300">
    <property type="component" value="Chromosome D"/>
</dbReference>
<dbReference type="GO" id="GO:0016592">
    <property type="term" value="C:mediator complex"/>
    <property type="evidence" value="ECO:0000318"/>
    <property type="project" value="GO_Central"/>
</dbReference>
<dbReference type="GO" id="GO:0003713">
    <property type="term" value="F:transcription coactivator activity"/>
    <property type="evidence" value="ECO:0000318"/>
    <property type="project" value="GO_Central"/>
</dbReference>
<dbReference type="GO" id="GO:0045944">
    <property type="term" value="P:positive regulation of transcription by RNA polymerase II"/>
    <property type="evidence" value="ECO:0000318"/>
    <property type="project" value="GO_Central"/>
</dbReference>
<dbReference type="InterPro" id="IPR009401">
    <property type="entry name" value="Med13_C"/>
</dbReference>
<dbReference type="InterPro" id="IPR051139">
    <property type="entry name" value="Mediator_complx_sub13"/>
</dbReference>
<dbReference type="InterPro" id="IPR021643">
    <property type="entry name" value="Mediator_Med13_N"/>
</dbReference>
<dbReference type="PANTHER" id="PTHR48249">
    <property type="entry name" value="MEDIATOR OF RNA POLYMERASE II TRANSCRIPTION SUBUNIT 13"/>
    <property type="match status" value="1"/>
</dbReference>
<dbReference type="PANTHER" id="PTHR48249:SF3">
    <property type="entry name" value="MEDIATOR OF RNA POLYMERASE II TRANSCRIPTION SUBUNIT 13"/>
    <property type="match status" value="1"/>
</dbReference>
<dbReference type="Pfam" id="PF06333">
    <property type="entry name" value="Med13_C"/>
    <property type="match status" value="1"/>
</dbReference>
<dbReference type="Pfam" id="PF11597">
    <property type="entry name" value="Med13_N"/>
    <property type="match status" value="1"/>
</dbReference>
<reference key="1">
    <citation type="journal article" date="2004" name="Nature">
        <title>Genome evolution in yeasts.</title>
        <authorList>
            <person name="Dujon B."/>
            <person name="Sherman D."/>
            <person name="Fischer G."/>
            <person name="Durrens P."/>
            <person name="Casaregola S."/>
            <person name="Lafontaine I."/>
            <person name="de Montigny J."/>
            <person name="Marck C."/>
            <person name="Neuveglise C."/>
            <person name="Talla E."/>
            <person name="Goffard N."/>
            <person name="Frangeul L."/>
            <person name="Aigle M."/>
            <person name="Anthouard V."/>
            <person name="Babour A."/>
            <person name="Barbe V."/>
            <person name="Barnay S."/>
            <person name="Blanchin S."/>
            <person name="Beckerich J.-M."/>
            <person name="Beyne E."/>
            <person name="Bleykasten C."/>
            <person name="Boisrame A."/>
            <person name="Boyer J."/>
            <person name="Cattolico L."/>
            <person name="Confanioleri F."/>
            <person name="de Daruvar A."/>
            <person name="Despons L."/>
            <person name="Fabre E."/>
            <person name="Fairhead C."/>
            <person name="Ferry-Dumazet H."/>
            <person name="Groppi A."/>
            <person name="Hantraye F."/>
            <person name="Hennequin C."/>
            <person name="Jauniaux N."/>
            <person name="Joyet P."/>
            <person name="Kachouri R."/>
            <person name="Kerrest A."/>
            <person name="Koszul R."/>
            <person name="Lemaire M."/>
            <person name="Lesur I."/>
            <person name="Ma L."/>
            <person name="Muller H."/>
            <person name="Nicaud J.-M."/>
            <person name="Nikolski M."/>
            <person name="Oztas S."/>
            <person name="Ozier-Kalogeropoulos O."/>
            <person name="Pellenz S."/>
            <person name="Potier S."/>
            <person name="Richard G.-F."/>
            <person name="Straub M.-L."/>
            <person name="Suleau A."/>
            <person name="Swennen D."/>
            <person name="Tekaia F."/>
            <person name="Wesolowski-Louvel M."/>
            <person name="Westhof E."/>
            <person name="Wirth B."/>
            <person name="Zeniou-Meyer M."/>
            <person name="Zivanovic Y."/>
            <person name="Bolotin-Fukuhara M."/>
            <person name="Thierry A."/>
            <person name="Bouchier C."/>
            <person name="Caudron B."/>
            <person name="Scarpelli C."/>
            <person name="Gaillardin C."/>
            <person name="Weissenbach J."/>
            <person name="Wincker P."/>
            <person name="Souciet J.-L."/>
        </authorList>
    </citation>
    <scope>NUCLEOTIDE SEQUENCE [LARGE SCALE GENOMIC DNA]</scope>
    <source>
        <strain>CLIB 122 / E 150</strain>
    </source>
</reference>